<proteinExistence type="inferred from homology"/>
<accession>B5BE99</accession>
<keyword id="KW-0143">Chaperone</keyword>
<keyword id="KW-0963">Cytoplasm</keyword>
<keyword id="KW-0346">Stress response</keyword>
<reference key="1">
    <citation type="journal article" date="2009" name="BMC Genomics">
        <title>Pseudogene accumulation in the evolutionary histories of Salmonella enterica serovars Paratyphi A and Typhi.</title>
        <authorList>
            <person name="Holt K.E."/>
            <person name="Thomson N.R."/>
            <person name="Wain J."/>
            <person name="Langridge G.C."/>
            <person name="Hasan R."/>
            <person name="Bhutta Z.A."/>
            <person name="Quail M.A."/>
            <person name="Norbertczak H."/>
            <person name="Walker D."/>
            <person name="Simmonds M."/>
            <person name="White B."/>
            <person name="Bason N."/>
            <person name="Mungall K."/>
            <person name="Dougan G."/>
            <person name="Parkhill J."/>
        </authorList>
    </citation>
    <scope>NUCLEOTIDE SEQUENCE [LARGE SCALE GENOMIC DNA]</scope>
    <source>
        <strain>AKU_12601</strain>
    </source>
</reference>
<evidence type="ECO:0000255" key="1">
    <source>
        <dbReference type="HAMAP-Rule" id="MF_01151"/>
    </source>
</evidence>
<evidence type="ECO:0000256" key="2">
    <source>
        <dbReference type="SAM" id="MobiDB-lite"/>
    </source>
</evidence>
<name>GRPE_SALPK</name>
<feature type="chain" id="PRO_1000137613" description="Protein GrpE">
    <location>
        <begin position="1"/>
        <end position="196"/>
    </location>
</feature>
<feature type="region of interest" description="Disordered" evidence="2">
    <location>
        <begin position="1"/>
        <end position="40"/>
    </location>
</feature>
<dbReference type="EMBL" id="FM200053">
    <property type="protein sequence ID" value="CAR60596.1"/>
    <property type="molecule type" value="Genomic_DNA"/>
</dbReference>
<dbReference type="RefSeq" id="WP_001518875.1">
    <property type="nucleotide sequence ID" value="NC_011147.1"/>
</dbReference>
<dbReference type="SMR" id="B5BE99"/>
<dbReference type="KEGG" id="sek:SSPA2365"/>
<dbReference type="HOGENOM" id="CLU_057217_6_0_6"/>
<dbReference type="Proteomes" id="UP000001869">
    <property type="component" value="Chromosome"/>
</dbReference>
<dbReference type="GO" id="GO:0005829">
    <property type="term" value="C:cytosol"/>
    <property type="evidence" value="ECO:0007669"/>
    <property type="project" value="TreeGrafter"/>
</dbReference>
<dbReference type="GO" id="GO:0000774">
    <property type="term" value="F:adenyl-nucleotide exchange factor activity"/>
    <property type="evidence" value="ECO:0007669"/>
    <property type="project" value="InterPro"/>
</dbReference>
<dbReference type="GO" id="GO:0042803">
    <property type="term" value="F:protein homodimerization activity"/>
    <property type="evidence" value="ECO:0007669"/>
    <property type="project" value="InterPro"/>
</dbReference>
<dbReference type="GO" id="GO:0051087">
    <property type="term" value="F:protein-folding chaperone binding"/>
    <property type="evidence" value="ECO:0007669"/>
    <property type="project" value="InterPro"/>
</dbReference>
<dbReference type="GO" id="GO:0051082">
    <property type="term" value="F:unfolded protein binding"/>
    <property type="evidence" value="ECO:0007669"/>
    <property type="project" value="TreeGrafter"/>
</dbReference>
<dbReference type="GO" id="GO:0006457">
    <property type="term" value="P:protein folding"/>
    <property type="evidence" value="ECO:0007669"/>
    <property type="project" value="InterPro"/>
</dbReference>
<dbReference type="CDD" id="cd00446">
    <property type="entry name" value="GrpE"/>
    <property type="match status" value="1"/>
</dbReference>
<dbReference type="FunFam" id="2.30.22.10:FF:000001">
    <property type="entry name" value="Protein GrpE"/>
    <property type="match status" value="1"/>
</dbReference>
<dbReference type="FunFam" id="3.90.20.20:FF:000001">
    <property type="entry name" value="Protein GrpE"/>
    <property type="match status" value="1"/>
</dbReference>
<dbReference type="Gene3D" id="3.90.20.20">
    <property type="match status" value="1"/>
</dbReference>
<dbReference type="Gene3D" id="2.30.22.10">
    <property type="entry name" value="Head domain of nucleotide exchange factor GrpE"/>
    <property type="match status" value="1"/>
</dbReference>
<dbReference type="HAMAP" id="MF_01151">
    <property type="entry name" value="GrpE"/>
    <property type="match status" value="1"/>
</dbReference>
<dbReference type="InterPro" id="IPR000740">
    <property type="entry name" value="GrpE"/>
</dbReference>
<dbReference type="InterPro" id="IPR013805">
    <property type="entry name" value="GrpE_coiled_coil"/>
</dbReference>
<dbReference type="InterPro" id="IPR009012">
    <property type="entry name" value="GrpE_head"/>
</dbReference>
<dbReference type="NCBIfam" id="NF007655">
    <property type="entry name" value="PRK10325.1"/>
    <property type="match status" value="1"/>
</dbReference>
<dbReference type="NCBIfam" id="NF010738">
    <property type="entry name" value="PRK14140.1"/>
    <property type="match status" value="1"/>
</dbReference>
<dbReference type="NCBIfam" id="NF010748">
    <property type="entry name" value="PRK14150.1"/>
    <property type="match status" value="1"/>
</dbReference>
<dbReference type="PANTHER" id="PTHR21237">
    <property type="entry name" value="GRPE PROTEIN"/>
    <property type="match status" value="1"/>
</dbReference>
<dbReference type="PANTHER" id="PTHR21237:SF23">
    <property type="entry name" value="GRPE PROTEIN HOMOLOG, MITOCHONDRIAL"/>
    <property type="match status" value="1"/>
</dbReference>
<dbReference type="Pfam" id="PF01025">
    <property type="entry name" value="GrpE"/>
    <property type="match status" value="1"/>
</dbReference>
<dbReference type="PRINTS" id="PR00773">
    <property type="entry name" value="GRPEPROTEIN"/>
</dbReference>
<dbReference type="SUPFAM" id="SSF58014">
    <property type="entry name" value="Coiled-coil domain of nucleotide exchange factor GrpE"/>
    <property type="match status" value="1"/>
</dbReference>
<dbReference type="SUPFAM" id="SSF51064">
    <property type="entry name" value="Head domain of nucleotide exchange factor GrpE"/>
    <property type="match status" value="1"/>
</dbReference>
<dbReference type="PROSITE" id="PS01071">
    <property type="entry name" value="GRPE"/>
    <property type="match status" value="1"/>
</dbReference>
<sequence>MSSKEQKTPEGQAPEEIIMDQHEEVEAVEPNDSAEQVDPRDEKIANLEVQLAEAQTRERDTVLRIKAEMENLRRRTEQDIEKAHKFALEKFVNELLPVIDSLDRALEVADKANPDMAAMVEGIELTLKSMLDVVRKFGVEVIAETNVPLDPNVHQAIAMVESEEVPAGNVLGIMQKGYTLNGRTIRAAMVTVAKAK</sequence>
<comment type="function">
    <text evidence="1">Participates actively in the response to hyperosmotic and heat shock by preventing the aggregation of stress-denatured proteins, in association with DnaK and GrpE. It is the nucleotide exchange factor for DnaK and may function as a thermosensor. Unfolded proteins bind initially to DnaJ; upon interaction with the DnaJ-bound protein, DnaK hydrolyzes its bound ATP, resulting in the formation of a stable complex. GrpE releases ADP from DnaK; ATP binding to DnaK triggers the release of the substrate protein, thus completing the reaction cycle. Several rounds of ATP-dependent interactions between DnaJ, DnaK and GrpE are required for fully efficient folding.</text>
</comment>
<comment type="subunit">
    <text evidence="1">Homodimer.</text>
</comment>
<comment type="subcellular location">
    <subcellularLocation>
        <location evidence="1">Cytoplasm</location>
    </subcellularLocation>
</comment>
<comment type="similarity">
    <text evidence="1">Belongs to the GrpE family.</text>
</comment>
<organism>
    <name type="scientific">Salmonella paratyphi A (strain AKU_12601)</name>
    <dbReference type="NCBI Taxonomy" id="554290"/>
    <lineage>
        <taxon>Bacteria</taxon>
        <taxon>Pseudomonadati</taxon>
        <taxon>Pseudomonadota</taxon>
        <taxon>Gammaproteobacteria</taxon>
        <taxon>Enterobacterales</taxon>
        <taxon>Enterobacteriaceae</taxon>
        <taxon>Salmonella</taxon>
    </lineage>
</organism>
<protein>
    <recommendedName>
        <fullName evidence="1">Protein GrpE</fullName>
    </recommendedName>
    <alternativeName>
        <fullName evidence="1">HSP-70 cofactor</fullName>
    </alternativeName>
</protein>
<gene>
    <name evidence="1" type="primary">grpE</name>
    <name type="ordered locus">SSPA2365</name>
</gene>